<proteinExistence type="inferred from homology"/>
<comment type="function">
    <text evidence="2">Ca(2+)-independent actin-binding protein. Binds actin microfilaments (MFs). Involved in actin filament bundling, severing and capping. Caps the barbed end of actin filaments and protects them from disassembly. Promotes VLN3-mediated MF severing.</text>
</comment>
<comment type="subcellular location">
    <subcellularLocation>
        <location evidence="1">Cytoplasm</location>
        <location evidence="1">Cytoskeleton</location>
    </subcellularLocation>
</comment>
<comment type="similarity">
    <text evidence="5">Belongs to the villin/gelsolin family.</text>
</comment>
<gene>
    <name evidence="2" type="primary">VLN1</name>
    <name evidence="6" type="ORF">OsI_18497</name>
</gene>
<protein>
    <recommendedName>
        <fullName evidence="2">Villin-1</fullName>
    </recommendedName>
</protein>
<name>VLN1_ORYSI</name>
<reference key="1">
    <citation type="journal article" date="2005" name="PLoS Biol.">
        <title>The genomes of Oryza sativa: a history of duplications.</title>
        <authorList>
            <person name="Yu J."/>
            <person name="Wang J."/>
            <person name="Lin W."/>
            <person name="Li S."/>
            <person name="Li H."/>
            <person name="Zhou J."/>
            <person name="Ni P."/>
            <person name="Dong W."/>
            <person name="Hu S."/>
            <person name="Zeng C."/>
            <person name="Zhang J."/>
            <person name="Zhang Y."/>
            <person name="Li R."/>
            <person name="Xu Z."/>
            <person name="Li S."/>
            <person name="Li X."/>
            <person name="Zheng H."/>
            <person name="Cong L."/>
            <person name="Lin L."/>
            <person name="Yin J."/>
            <person name="Geng J."/>
            <person name="Li G."/>
            <person name="Shi J."/>
            <person name="Liu J."/>
            <person name="Lv H."/>
            <person name="Li J."/>
            <person name="Wang J."/>
            <person name="Deng Y."/>
            <person name="Ran L."/>
            <person name="Shi X."/>
            <person name="Wang X."/>
            <person name="Wu Q."/>
            <person name="Li C."/>
            <person name="Ren X."/>
            <person name="Wang J."/>
            <person name="Wang X."/>
            <person name="Li D."/>
            <person name="Liu D."/>
            <person name="Zhang X."/>
            <person name="Ji Z."/>
            <person name="Zhao W."/>
            <person name="Sun Y."/>
            <person name="Zhang Z."/>
            <person name="Bao J."/>
            <person name="Han Y."/>
            <person name="Dong L."/>
            <person name="Ji J."/>
            <person name="Chen P."/>
            <person name="Wu S."/>
            <person name="Liu J."/>
            <person name="Xiao Y."/>
            <person name="Bu D."/>
            <person name="Tan J."/>
            <person name="Yang L."/>
            <person name="Ye C."/>
            <person name="Zhang J."/>
            <person name="Xu J."/>
            <person name="Zhou Y."/>
            <person name="Yu Y."/>
            <person name="Zhang B."/>
            <person name="Zhuang S."/>
            <person name="Wei H."/>
            <person name="Liu B."/>
            <person name="Lei M."/>
            <person name="Yu H."/>
            <person name="Li Y."/>
            <person name="Xu H."/>
            <person name="Wei S."/>
            <person name="He X."/>
            <person name="Fang L."/>
            <person name="Zhang Z."/>
            <person name="Zhang Y."/>
            <person name="Huang X."/>
            <person name="Su Z."/>
            <person name="Tong W."/>
            <person name="Li J."/>
            <person name="Tong Z."/>
            <person name="Li S."/>
            <person name="Ye J."/>
            <person name="Wang L."/>
            <person name="Fang L."/>
            <person name="Lei T."/>
            <person name="Chen C.-S."/>
            <person name="Chen H.-C."/>
            <person name="Xu Z."/>
            <person name="Li H."/>
            <person name="Huang H."/>
            <person name="Zhang F."/>
            <person name="Xu H."/>
            <person name="Li N."/>
            <person name="Zhao C."/>
            <person name="Li S."/>
            <person name="Dong L."/>
            <person name="Huang Y."/>
            <person name="Li L."/>
            <person name="Xi Y."/>
            <person name="Qi Q."/>
            <person name="Li W."/>
            <person name="Zhang B."/>
            <person name="Hu W."/>
            <person name="Zhang Y."/>
            <person name="Tian X."/>
            <person name="Jiao Y."/>
            <person name="Liang X."/>
            <person name="Jin J."/>
            <person name="Gao L."/>
            <person name="Zheng W."/>
            <person name="Hao B."/>
            <person name="Liu S.-M."/>
            <person name="Wang W."/>
            <person name="Yuan L."/>
            <person name="Cao M."/>
            <person name="McDermott J."/>
            <person name="Samudrala R."/>
            <person name="Wang J."/>
            <person name="Wong G.K.-S."/>
            <person name="Yang H."/>
        </authorList>
    </citation>
    <scope>NUCLEOTIDE SEQUENCE [LARGE SCALE GENOMIC DNA]</scope>
    <source>
        <strain>cv. 93-11</strain>
    </source>
</reference>
<keyword id="KW-0117">Actin capping</keyword>
<keyword id="KW-0009">Actin-binding</keyword>
<keyword id="KW-0106">Calcium</keyword>
<keyword id="KW-0963">Cytoplasm</keyword>
<keyword id="KW-0206">Cytoskeleton</keyword>
<keyword id="KW-1185">Reference proteome</keyword>
<keyword id="KW-0677">Repeat</keyword>
<evidence type="ECO:0000250" key="1">
    <source>
        <dbReference type="UniProtKB" id="O81644"/>
    </source>
</evidence>
<evidence type="ECO:0000250" key="2">
    <source>
        <dbReference type="UniProtKB" id="Q0DKN3"/>
    </source>
</evidence>
<evidence type="ECO:0000255" key="3"/>
<evidence type="ECO:0000256" key="4">
    <source>
        <dbReference type="SAM" id="MobiDB-lite"/>
    </source>
</evidence>
<evidence type="ECO:0000305" key="5"/>
<evidence type="ECO:0000312" key="6">
    <source>
        <dbReference type="EMBL" id="EEC78540.1"/>
    </source>
</evidence>
<sequence length="849" mass="95220">MKGVDDAFLGVGDKPGLDIWCIMGSNLIAIEKSLHGKFYTGNTYIILSTVELKSGVRQHNVHYWVGEEAKEEDCLTASDKAIELDVALGSNTVQYRETQGEESDKFLSYFKPCIIPIQGSLSSHMRIYGDKSKDTTMFRCEGEHVARVTEVPFSRSSLDHKAVFVVDTESKIFLFSGCNSSMQTRAKALDVVKHLKENRHCGRCEIATIEDGKLVGDSDAGDFWNLFGGYAPIPRDVQDTVMTELMTTSSKKLFWINKRNLVPVETNLLEREMLNSDRNYILDCGTEVFLWMGMTTLVSERRTSVTALEDYVRCEGRQSNARSVILTEGHETVEFKMHFQHWPKNAVPKLYEAGREKVAAIFKHQGYDVTEIPEDKPRHFISCNGSLKVWLVDNGSVTLLCTEEQEQLYNGDCYIIRYSYIEDGKDYHLFFAWSGLNSINEDRVAAASLMSGMIDSVKGHAVVAQVFEGREPEMFFLVFKSLIIFKGGRSMAYKNFVSQRSDANGWYQKNGVALFRVQGLKHDCIRAIQVDLAASSLNSSHCYILQAGGSFFTWLGSLSSPSDHNLLDRMMDKLCPLKQSLLVREGSEPDRFWEALGGRSEYSKEKQVKDWPADPHLYTCHFEQGLFKAKEVFSFSQDDLVTEEILILDCVEELHIWVGHQSGVLSMEQALDIGKMFLQAGIHQDGRRPIDTTMYIVTEGDEPRFFTSFFNWDYSKQTMLGNSFERKLAILKGISQKLETPERSLRKSSSSSLPRRSPGTSSSEPTTPEQRAAARTFASASTGKLLRERSPAALSPSLSTPSPSPRSRSSASSSPASWNSTPSTVARRLFPPSLHASAEAVATGTPRRL</sequence>
<organism>
    <name type="scientific">Oryza sativa subsp. indica</name>
    <name type="common">Rice</name>
    <dbReference type="NCBI Taxonomy" id="39946"/>
    <lineage>
        <taxon>Eukaryota</taxon>
        <taxon>Viridiplantae</taxon>
        <taxon>Streptophyta</taxon>
        <taxon>Embryophyta</taxon>
        <taxon>Tracheophyta</taxon>
        <taxon>Spermatophyta</taxon>
        <taxon>Magnoliopsida</taxon>
        <taxon>Liliopsida</taxon>
        <taxon>Poales</taxon>
        <taxon>Poaceae</taxon>
        <taxon>BOP clade</taxon>
        <taxon>Oryzoideae</taxon>
        <taxon>Oryzeae</taxon>
        <taxon>Oryzinae</taxon>
        <taxon>Oryza</taxon>
        <taxon>Oryza sativa</taxon>
    </lineage>
</organism>
<accession>B8AY58</accession>
<feature type="chain" id="PRO_0000438164" description="Villin-1">
    <location>
        <begin position="1"/>
        <end position="849"/>
    </location>
</feature>
<feature type="repeat" description="Gelsolin-like 1" evidence="3">
    <location>
        <begin position="30"/>
        <end position="107"/>
    </location>
</feature>
<feature type="repeat" description="Gelsolin-like 2" evidence="3">
    <location>
        <begin position="147"/>
        <end position="213"/>
    </location>
</feature>
<feature type="repeat" description="Gelsolin-like 3" evidence="3">
    <location>
        <begin position="262"/>
        <end position="335"/>
    </location>
</feature>
<feature type="repeat" description="Gelsolin-like 4" evidence="3">
    <location>
        <begin position="405"/>
        <end position="475"/>
    </location>
</feature>
<feature type="repeat" description="Gelsolin-like 5" evidence="3">
    <location>
        <begin position="527"/>
        <end position="566"/>
    </location>
</feature>
<feature type="region of interest" description="Disordered" evidence="4">
    <location>
        <begin position="739"/>
        <end position="849"/>
    </location>
</feature>
<feature type="compositionally biased region" description="Low complexity" evidence="4">
    <location>
        <begin position="747"/>
        <end position="782"/>
    </location>
</feature>
<feature type="compositionally biased region" description="Low complexity" evidence="4">
    <location>
        <begin position="791"/>
        <end position="823"/>
    </location>
</feature>
<dbReference type="EMBL" id="CM000130">
    <property type="protein sequence ID" value="EEC78540.1"/>
    <property type="molecule type" value="Genomic_DNA"/>
</dbReference>
<dbReference type="SMR" id="B8AY58"/>
<dbReference type="STRING" id="39946.B8AY58"/>
<dbReference type="EnsemblPlants" id="BGIOSGA019199-TA">
    <property type="protein sequence ID" value="BGIOSGA019199-PA"/>
    <property type="gene ID" value="BGIOSGA019199"/>
</dbReference>
<dbReference type="Gramene" id="BGIOSGA019199-TA">
    <property type="protein sequence ID" value="BGIOSGA019199-PA"/>
    <property type="gene ID" value="BGIOSGA019199"/>
</dbReference>
<dbReference type="HOGENOM" id="CLU_002568_2_1_1"/>
<dbReference type="OMA" id="GHESTDF"/>
<dbReference type="Proteomes" id="UP000007015">
    <property type="component" value="Chromosome 5"/>
</dbReference>
<dbReference type="GO" id="GO:0032432">
    <property type="term" value="C:actin filament bundle"/>
    <property type="evidence" value="ECO:0000250"/>
    <property type="project" value="UniProtKB"/>
</dbReference>
<dbReference type="GO" id="GO:0005737">
    <property type="term" value="C:cytoplasm"/>
    <property type="evidence" value="ECO:0007669"/>
    <property type="project" value="UniProtKB-KW"/>
</dbReference>
<dbReference type="GO" id="GO:0051015">
    <property type="term" value="F:actin filament binding"/>
    <property type="evidence" value="ECO:0000250"/>
    <property type="project" value="UniProtKB"/>
</dbReference>
<dbReference type="GO" id="GO:0051693">
    <property type="term" value="P:actin filament capping"/>
    <property type="evidence" value="ECO:0000250"/>
    <property type="project" value="UniProtKB"/>
</dbReference>
<dbReference type="GO" id="GO:0007015">
    <property type="term" value="P:actin filament organization"/>
    <property type="evidence" value="ECO:0000250"/>
    <property type="project" value="UniProtKB"/>
</dbReference>
<dbReference type="GO" id="GO:0051014">
    <property type="term" value="P:actin filament severing"/>
    <property type="evidence" value="ECO:0000250"/>
    <property type="project" value="UniProtKB"/>
</dbReference>
<dbReference type="CDD" id="cd11290">
    <property type="entry name" value="gelsolin_S1_like"/>
    <property type="match status" value="1"/>
</dbReference>
<dbReference type="CDD" id="cd11293">
    <property type="entry name" value="gelsolin_S4_like"/>
    <property type="match status" value="1"/>
</dbReference>
<dbReference type="CDD" id="cd11288">
    <property type="entry name" value="gelsolin_S5_like"/>
    <property type="match status" value="1"/>
</dbReference>
<dbReference type="FunFam" id="3.40.20.10:FF:000001">
    <property type="entry name" value="Gelsolin"/>
    <property type="match status" value="1"/>
</dbReference>
<dbReference type="FunFam" id="3.40.20.10:FF:000076">
    <property type="entry name" value="Villin-1"/>
    <property type="match status" value="1"/>
</dbReference>
<dbReference type="FunFam" id="3.40.20.10:FF:000108">
    <property type="entry name" value="Villin-1"/>
    <property type="match status" value="1"/>
</dbReference>
<dbReference type="FunFam" id="3.40.20.10:FF:000059">
    <property type="entry name" value="Villin-like 1"/>
    <property type="match status" value="1"/>
</dbReference>
<dbReference type="Gene3D" id="3.40.20.10">
    <property type="entry name" value="Severin"/>
    <property type="match status" value="6"/>
</dbReference>
<dbReference type="InterPro" id="IPR029006">
    <property type="entry name" value="ADF-H/Gelsolin-like_dom_sf"/>
</dbReference>
<dbReference type="InterPro" id="IPR007123">
    <property type="entry name" value="Gelsolin-like_dom"/>
</dbReference>
<dbReference type="InterPro" id="IPR007122">
    <property type="entry name" value="Villin/Gelsolin"/>
</dbReference>
<dbReference type="PANTHER" id="PTHR11977">
    <property type="entry name" value="VILLIN"/>
    <property type="match status" value="1"/>
</dbReference>
<dbReference type="PANTHER" id="PTHR11977:SF25">
    <property type="entry name" value="VILLIN-1"/>
    <property type="match status" value="1"/>
</dbReference>
<dbReference type="Pfam" id="PF00626">
    <property type="entry name" value="Gelsolin"/>
    <property type="match status" value="5"/>
</dbReference>
<dbReference type="PRINTS" id="PR00597">
    <property type="entry name" value="GELSOLIN"/>
</dbReference>
<dbReference type="SMART" id="SM00262">
    <property type="entry name" value="GEL"/>
    <property type="match status" value="6"/>
</dbReference>
<dbReference type="SUPFAM" id="SSF55753">
    <property type="entry name" value="Actin depolymerizing proteins"/>
    <property type="match status" value="6"/>
</dbReference>